<organism>
    <name type="scientific">Syntrophobacter fumaroxidans (strain DSM 10017 / MPOB)</name>
    <dbReference type="NCBI Taxonomy" id="335543"/>
    <lineage>
        <taxon>Bacteria</taxon>
        <taxon>Pseudomonadati</taxon>
        <taxon>Thermodesulfobacteriota</taxon>
        <taxon>Syntrophobacteria</taxon>
        <taxon>Syntrophobacterales</taxon>
        <taxon>Syntrophobacteraceae</taxon>
        <taxon>Syntrophobacter</taxon>
    </lineage>
</organism>
<feature type="chain" id="PRO_0000374603" description="tRNA-2-methylthio-N(6)-dimethylallyladenosine synthase">
    <location>
        <begin position="1"/>
        <end position="456"/>
    </location>
</feature>
<feature type="domain" description="MTTase N-terminal" evidence="1">
    <location>
        <begin position="13"/>
        <end position="129"/>
    </location>
</feature>
<feature type="domain" description="Radical SAM core" evidence="2">
    <location>
        <begin position="154"/>
        <end position="384"/>
    </location>
</feature>
<feature type="domain" description="TRAM" evidence="1">
    <location>
        <begin position="387"/>
        <end position="450"/>
    </location>
</feature>
<feature type="binding site" evidence="1">
    <location>
        <position position="22"/>
    </location>
    <ligand>
        <name>[4Fe-4S] cluster</name>
        <dbReference type="ChEBI" id="CHEBI:49883"/>
        <label>1</label>
    </ligand>
</feature>
<feature type="binding site" evidence="1">
    <location>
        <position position="58"/>
    </location>
    <ligand>
        <name>[4Fe-4S] cluster</name>
        <dbReference type="ChEBI" id="CHEBI:49883"/>
        <label>1</label>
    </ligand>
</feature>
<feature type="binding site" evidence="1">
    <location>
        <position position="92"/>
    </location>
    <ligand>
        <name>[4Fe-4S] cluster</name>
        <dbReference type="ChEBI" id="CHEBI:49883"/>
        <label>1</label>
    </ligand>
</feature>
<feature type="binding site" evidence="1">
    <location>
        <position position="168"/>
    </location>
    <ligand>
        <name>[4Fe-4S] cluster</name>
        <dbReference type="ChEBI" id="CHEBI:49883"/>
        <label>2</label>
        <note>4Fe-4S-S-AdoMet</note>
    </ligand>
</feature>
<feature type="binding site" evidence="1">
    <location>
        <position position="172"/>
    </location>
    <ligand>
        <name>[4Fe-4S] cluster</name>
        <dbReference type="ChEBI" id="CHEBI:49883"/>
        <label>2</label>
        <note>4Fe-4S-S-AdoMet</note>
    </ligand>
</feature>
<feature type="binding site" evidence="1">
    <location>
        <position position="175"/>
    </location>
    <ligand>
        <name>[4Fe-4S] cluster</name>
        <dbReference type="ChEBI" id="CHEBI:49883"/>
        <label>2</label>
        <note>4Fe-4S-S-AdoMet</note>
    </ligand>
</feature>
<dbReference type="EC" id="2.8.4.3" evidence="1"/>
<dbReference type="EMBL" id="CP000478">
    <property type="protein sequence ID" value="ABK16119.1"/>
    <property type="molecule type" value="Genomic_DNA"/>
</dbReference>
<dbReference type="RefSeq" id="WP_011697292.1">
    <property type="nucleotide sequence ID" value="NC_008554.1"/>
</dbReference>
<dbReference type="SMR" id="A0LFB7"/>
<dbReference type="FunCoup" id="A0LFB7">
    <property type="interactions" value="546"/>
</dbReference>
<dbReference type="STRING" id="335543.Sfum_0419"/>
<dbReference type="KEGG" id="sfu:Sfum_0419"/>
<dbReference type="eggNOG" id="COG0621">
    <property type="taxonomic scope" value="Bacteria"/>
</dbReference>
<dbReference type="HOGENOM" id="CLU_018697_2_0_7"/>
<dbReference type="InParanoid" id="A0LFB7"/>
<dbReference type="OrthoDB" id="9805215at2"/>
<dbReference type="Proteomes" id="UP000001784">
    <property type="component" value="Chromosome"/>
</dbReference>
<dbReference type="GO" id="GO:0005829">
    <property type="term" value="C:cytosol"/>
    <property type="evidence" value="ECO:0007669"/>
    <property type="project" value="TreeGrafter"/>
</dbReference>
<dbReference type="GO" id="GO:0051539">
    <property type="term" value="F:4 iron, 4 sulfur cluster binding"/>
    <property type="evidence" value="ECO:0007669"/>
    <property type="project" value="UniProtKB-UniRule"/>
</dbReference>
<dbReference type="GO" id="GO:0046872">
    <property type="term" value="F:metal ion binding"/>
    <property type="evidence" value="ECO:0007669"/>
    <property type="project" value="UniProtKB-KW"/>
</dbReference>
<dbReference type="GO" id="GO:0035597">
    <property type="term" value="F:N6-isopentenyladenosine methylthiotransferase activity"/>
    <property type="evidence" value="ECO:0007669"/>
    <property type="project" value="TreeGrafter"/>
</dbReference>
<dbReference type="CDD" id="cd01335">
    <property type="entry name" value="Radical_SAM"/>
    <property type="match status" value="1"/>
</dbReference>
<dbReference type="FunFam" id="3.40.50.12160:FF:000003">
    <property type="entry name" value="CDK5 regulatory subunit-associated protein 1"/>
    <property type="match status" value="1"/>
</dbReference>
<dbReference type="FunFam" id="3.80.30.20:FF:000001">
    <property type="entry name" value="tRNA-2-methylthio-N(6)-dimethylallyladenosine synthase 2"/>
    <property type="match status" value="1"/>
</dbReference>
<dbReference type="Gene3D" id="3.40.50.12160">
    <property type="entry name" value="Methylthiotransferase, N-terminal domain"/>
    <property type="match status" value="1"/>
</dbReference>
<dbReference type="Gene3D" id="3.80.30.20">
    <property type="entry name" value="tm_1862 like domain"/>
    <property type="match status" value="1"/>
</dbReference>
<dbReference type="HAMAP" id="MF_01864">
    <property type="entry name" value="tRNA_metthiotr_MiaB"/>
    <property type="match status" value="1"/>
</dbReference>
<dbReference type="InterPro" id="IPR006638">
    <property type="entry name" value="Elp3/MiaA/NifB-like_rSAM"/>
</dbReference>
<dbReference type="InterPro" id="IPR005839">
    <property type="entry name" value="Methylthiotransferase"/>
</dbReference>
<dbReference type="InterPro" id="IPR020612">
    <property type="entry name" value="Methylthiotransferase_CS"/>
</dbReference>
<dbReference type="InterPro" id="IPR013848">
    <property type="entry name" value="Methylthiotransferase_N"/>
</dbReference>
<dbReference type="InterPro" id="IPR038135">
    <property type="entry name" value="Methylthiotransferase_N_sf"/>
</dbReference>
<dbReference type="InterPro" id="IPR006463">
    <property type="entry name" value="MiaB_methiolase"/>
</dbReference>
<dbReference type="InterPro" id="IPR007197">
    <property type="entry name" value="rSAM"/>
</dbReference>
<dbReference type="InterPro" id="IPR023404">
    <property type="entry name" value="rSAM_horseshoe"/>
</dbReference>
<dbReference type="InterPro" id="IPR002792">
    <property type="entry name" value="TRAM_dom"/>
</dbReference>
<dbReference type="NCBIfam" id="TIGR01574">
    <property type="entry name" value="miaB-methiolase"/>
    <property type="match status" value="1"/>
</dbReference>
<dbReference type="NCBIfam" id="TIGR00089">
    <property type="entry name" value="MiaB/RimO family radical SAM methylthiotransferase"/>
    <property type="match status" value="1"/>
</dbReference>
<dbReference type="PANTHER" id="PTHR43020">
    <property type="entry name" value="CDK5 REGULATORY SUBUNIT-ASSOCIATED PROTEIN 1"/>
    <property type="match status" value="1"/>
</dbReference>
<dbReference type="PANTHER" id="PTHR43020:SF2">
    <property type="entry name" value="MITOCHONDRIAL TRNA METHYLTHIOTRANSFERASE CDK5RAP1"/>
    <property type="match status" value="1"/>
</dbReference>
<dbReference type="Pfam" id="PF04055">
    <property type="entry name" value="Radical_SAM"/>
    <property type="match status" value="1"/>
</dbReference>
<dbReference type="Pfam" id="PF01938">
    <property type="entry name" value="TRAM"/>
    <property type="match status" value="1"/>
</dbReference>
<dbReference type="Pfam" id="PF00919">
    <property type="entry name" value="UPF0004"/>
    <property type="match status" value="1"/>
</dbReference>
<dbReference type="SFLD" id="SFLDF00273">
    <property type="entry name" value="(dimethylallyl)adenosine_tRNA"/>
    <property type="match status" value="1"/>
</dbReference>
<dbReference type="SFLD" id="SFLDG01082">
    <property type="entry name" value="B12-binding_domain_containing"/>
    <property type="match status" value="1"/>
</dbReference>
<dbReference type="SFLD" id="SFLDG01061">
    <property type="entry name" value="methylthiotransferase"/>
    <property type="match status" value="1"/>
</dbReference>
<dbReference type="SMART" id="SM00729">
    <property type="entry name" value="Elp3"/>
    <property type="match status" value="1"/>
</dbReference>
<dbReference type="SUPFAM" id="SSF102114">
    <property type="entry name" value="Radical SAM enzymes"/>
    <property type="match status" value="1"/>
</dbReference>
<dbReference type="PROSITE" id="PS51449">
    <property type="entry name" value="MTTASE_N"/>
    <property type="match status" value="1"/>
</dbReference>
<dbReference type="PROSITE" id="PS01278">
    <property type="entry name" value="MTTASE_RADICAL"/>
    <property type="match status" value="1"/>
</dbReference>
<dbReference type="PROSITE" id="PS51918">
    <property type="entry name" value="RADICAL_SAM"/>
    <property type="match status" value="1"/>
</dbReference>
<dbReference type="PROSITE" id="PS50926">
    <property type="entry name" value="TRAM"/>
    <property type="match status" value="1"/>
</dbReference>
<evidence type="ECO:0000255" key="1">
    <source>
        <dbReference type="HAMAP-Rule" id="MF_01864"/>
    </source>
</evidence>
<evidence type="ECO:0000255" key="2">
    <source>
        <dbReference type="PROSITE-ProRule" id="PRU01266"/>
    </source>
</evidence>
<gene>
    <name evidence="1" type="primary">miaB</name>
    <name type="ordered locus">Sfum_0419</name>
</gene>
<proteinExistence type="inferred from homology"/>
<accession>A0LFB7</accession>
<reference key="1">
    <citation type="submission" date="2006-10" db="EMBL/GenBank/DDBJ databases">
        <title>Complete sequence of Syntrophobacter fumaroxidans MPOB.</title>
        <authorList>
            <consortium name="US DOE Joint Genome Institute"/>
            <person name="Copeland A."/>
            <person name="Lucas S."/>
            <person name="Lapidus A."/>
            <person name="Barry K."/>
            <person name="Detter J.C."/>
            <person name="Glavina del Rio T."/>
            <person name="Hammon N."/>
            <person name="Israni S."/>
            <person name="Pitluck S."/>
            <person name="Goltsman E.G."/>
            <person name="Martinez M."/>
            <person name="Schmutz J."/>
            <person name="Larimer F."/>
            <person name="Land M."/>
            <person name="Hauser L."/>
            <person name="Kyrpides N."/>
            <person name="Kim E."/>
            <person name="Boone D.R."/>
            <person name="Brockman F."/>
            <person name="Culley D."/>
            <person name="Ferry J."/>
            <person name="Gunsalus R."/>
            <person name="McInerney M.J."/>
            <person name="Morrison M."/>
            <person name="Plugge C."/>
            <person name="Rohlin L."/>
            <person name="Scholten J."/>
            <person name="Sieber J."/>
            <person name="Stams A.J.M."/>
            <person name="Worm P."/>
            <person name="Henstra A.M."/>
            <person name="Richardson P."/>
        </authorList>
    </citation>
    <scope>NUCLEOTIDE SEQUENCE [LARGE SCALE GENOMIC DNA]</scope>
    <source>
        <strain>DSM 10017 / MPOB</strain>
    </source>
</reference>
<keyword id="KW-0004">4Fe-4S</keyword>
<keyword id="KW-0963">Cytoplasm</keyword>
<keyword id="KW-0408">Iron</keyword>
<keyword id="KW-0411">Iron-sulfur</keyword>
<keyword id="KW-0479">Metal-binding</keyword>
<keyword id="KW-1185">Reference proteome</keyword>
<keyword id="KW-0949">S-adenosyl-L-methionine</keyword>
<keyword id="KW-0808">Transferase</keyword>
<keyword id="KW-0819">tRNA processing</keyword>
<name>MIAB_SYNFM</name>
<comment type="function">
    <text evidence="1">Catalyzes the methylthiolation of N6-(dimethylallyl)adenosine (i(6)A), leading to the formation of 2-methylthio-N6-(dimethylallyl)adenosine (ms(2)i(6)A) at position 37 in tRNAs that read codons beginning with uridine.</text>
</comment>
<comment type="catalytic activity">
    <reaction evidence="1">
        <text>N(6)-dimethylallyladenosine(37) in tRNA + (sulfur carrier)-SH + AH2 + 2 S-adenosyl-L-methionine = 2-methylsulfanyl-N(6)-dimethylallyladenosine(37) in tRNA + (sulfur carrier)-H + 5'-deoxyadenosine + L-methionine + A + S-adenosyl-L-homocysteine + 2 H(+)</text>
        <dbReference type="Rhea" id="RHEA:37067"/>
        <dbReference type="Rhea" id="RHEA-COMP:10375"/>
        <dbReference type="Rhea" id="RHEA-COMP:10376"/>
        <dbReference type="Rhea" id="RHEA-COMP:14737"/>
        <dbReference type="Rhea" id="RHEA-COMP:14739"/>
        <dbReference type="ChEBI" id="CHEBI:13193"/>
        <dbReference type="ChEBI" id="CHEBI:15378"/>
        <dbReference type="ChEBI" id="CHEBI:17319"/>
        <dbReference type="ChEBI" id="CHEBI:17499"/>
        <dbReference type="ChEBI" id="CHEBI:29917"/>
        <dbReference type="ChEBI" id="CHEBI:57844"/>
        <dbReference type="ChEBI" id="CHEBI:57856"/>
        <dbReference type="ChEBI" id="CHEBI:59789"/>
        <dbReference type="ChEBI" id="CHEBI:64428"/>
        <dbReference type="ChEBI" id="CHEBI:74415"/>
        <dbReference type="ChEBI" id="CHEBI:74417"/>
        <dbReference type="EC" id="2.8.4.3"/>
    </reaction>
</comment>
<comment type="cofactor">
    <cofactor evidence="1">
        <name>[4Fe-4S] cluster</name>
        <dbReference type="ChEBI" id="CHEBI:49883"/>
    </cofactor>
    <text evidence="1">Binds 2 [4Fe-4S] clusters. One cluster is coordinated with 3 cysteines and an exchangeable S-adenosyl-L-methionine.</text>
</comment>
<comment type="subunit">
    <text evidence="1">Monomer.</text>
</comment>
<comment type="subcellular location">
    <subcellularLocation>
        <location evidence="1">Cytoplasm</location>
    </subcellularLocation>
</comment>
<comment type="similarity">
    <text evidence="1">Belongs to the methylthiotransferase family. MiaB subfamily.</text>
</comment>
<sequence length="456" mass="51141">MITPLAKTAPAPRYLYVRTFGCQMNEYDSQRALRLLCAVGYRPTSDIADADVIFLNTCSVRDKAEQKVYSFLGRLRRLKAHRPWLKIVVAGCVAQQLGDGLLKRFEHVDLVVGTRGIGSIASLLEEVERSKRRVAHLPAEELQGFTTDKCRTVGTGDVVAQVTIMQGCNNFCTYCIVPHVRGRERSRAPDDILREIDFLASRGAREVLLLGQNVNSYGRGLPDPISFPDLLRRIGKETSIRRVRFTTSHPKDLTEDLIECFAGLPFLCKHLHLPFQSGSDGILKLMHRGYTARQYLEKIARLREVCPEIALSTDVIVGFPAESEEDYLQTLRLIEEVRFDSLFSFRYSDRPLTRAAGFPDKVPMDVKVRRLARLQSIQADITLQKNLAETGTVREVLVEGPSKASNGQMTGRTQQNRIINFQCPVDLTGKIVPVRIVAAYSHSLKGELLSQPGKES</sequence>
<protein>
    <recommendedName>
        <fullName evidence="1">tRNA-2-methylthio-N(6)-dimethylallyladenosine synthase</fullName>
        <ecNumber evidence="1">2.8.4.3</ecNumber>
    </recommendedName>
    <alternativeName>
        <fullName evidence="1">(Dimethylallyl)adenosine tRNA methylthiotransferase MiaB</fullName>
    </alternativeName>
    <alternativeName>
        <fullName evidence="1">tRNA-i(6)A37 methylthiotransferase</fullName>
    </alternativeName>
</protein>